<reference key="1">
    <citation type="journal article" date="2005" name="Nat. Biotechnol.">
        <title>The genome sequence of the ethanologenic bacterium Zymomonas mobilis ZM4.</title>
        <authorList>
            <person name="Seo J.-S."/>
            <person name="Chong H."/>
            <person name="Park H.S."/>
            <person name="Yoon K.-O."/>
            <person name="Jung C."/>
            <person name="Kim J.J."/>
            <person name="Hong J.H."/>
            <person name="Kim H."/>
            <person name="Kim J.-H."/>
            <person name="Kil J.-I."/>
            <person name="Park C.J."/>
            <person name="Oh H.-M."/>
            <person name="Lee J.-S."/>
            <person name="Jin S.-J."/>
            <person name="Um H.-W."/>
            <person name="Lee H.-J."/>
            <person name="Oh S.-J."/>
            <person name="Kim J.Y."/>
            <person name="Kang H.L."/>
            <person name="Lee S.Y."/>
            <person name="Lee K.J."/>
            <person name="Kang H.S."/>
        </authorList>
    </citation>
    <scope>NUCLEOTIDE SEQUENCE [LARGE SCALE GENOMIC DNA]</scope>
    <source>
        <strain>ATCC 31821 / ZM4 / CP4</strain>
    </source>
</reference>
<gene>
    <name evidence="1" type="primary">purA</name>
    <name type="ordered locus">ZMO1687</name>
</gene>
<comment type="function">
    <text evidence="1">Plays an important role in the de novo pathway of purine nucleotide biosynthesis. Catalyzes the first committed step in the biosynthesis of AMP from IMP.</text>
</comment>
<comment type="catalytic activity">
    <reaction evidence="1">
        <text>IMP + L-aspartate + GTP = N(6)-(1,2-dicarboxyethyl)-AMP + GDP + phosphate + 2 H(+)</text>
        <dbReference type="Rhea" id="RHEA:15753"/>
        <dbReference type="ChEBI" id="CHEBI:15378"/>
        <dbReference type="ChEBI" id="CHEBI:29991"/>
        <dbReference type="ChEBI" id="CHEBI:37565"/>
        <dbReference type="ChEBI" id="CHEBI:43474"/>
        <dbReference type="ChEBI" id="CHEBI:57567"/>
        <dbReference type="ChEBI" id="CHEBI:58053"/>
        <dbReference type="ChEBI" id="CHEBI:58189"/>
        <dbReference type="EC" id="6.3.4.4"/>
    </reaction>
</comment>
<comment type="cofactor">
    <cofactor evidence="1">
        <name>Mg(2+)</name>
        <dbReference type="ChEBI" id="CHEBI:18420"/>
    </cofactor>
    <text evidence="1">Binds 1 Mg(2+) ion per subunit.</text>
</comment>
<comment type="pathway">
    <text evidence="1">Purine metabolism; AMP biosynthesis via de novo pathway; AMP from IMP: step 1/2.</text>
</comment>
<comment type="subunit">
    <text evidence="1">Homodimer.</text>
</comment>
<comment type="subcellular location">
    <subcellularLocation>
        <location evidence="1">Cytoplasm</location>
    </subcellularLocation>
</comment>
<comment type="similarity">
    <text evidence="1">Belongs to the adenylosuccinate synthetase family.</text>
</comment>
<keyword id="KW-0963">Cytoplasm</keyword>
<keyword id="KW-0342">GTP-binding</keyword>
<keyword id="KW-0436">Ligase</keyword>
<keyword id="KW-0460">Magnesium</keyword>
<keyword id="KW-0479">Metal-binding</keyword>
<keyword id="KW-0547">Nucleotide-binding</keyword>
<keyword id="KW-0658">Purine biosynthesis</keyword>
<keyword id="KW-1185">Reference proteome</keyword>
<name>PURA_ZYMMO</name>
<feature type="chain" id="PRO_0000224339" description="Adenylosuccinate synthetase">
    <location>
        <begin position="1"/>
        <end position="429"/>
    </location>
</feature>
<feature type="active site" description="Proton acceptor" evidence="1">
    <location>
        <position position="13"/>
    </location>
</feature>
<feature type="active site" description="Proton donor" evidence="1">
    <location>
        <position position="41"/>
    </location>
</feature>
<feature type="binding site" evidence="1">
    <location>
        <begin position="12"/>
        <end position="18"/>
    </location>
    <ligand>
        <name>GTP</name>
        <dbReference type="ChEBI" id="CHEBI:37565"/>
    </ligand>
</feature>
<feature type="binding site" description="in other chain" evidence="1">
    <location>
        <begin position="13"/>
        <end position="16"/>
    </location>
    <ligand>
        <name>IMP</name>
        <dbReference type="ChEBI" id="CHEBI:58053"/>
        <note>ligand shared between dimeric partners</note>
    </ligand>
</feature>
<feature type="binding site" evidence="1">
    <location>
        <position position="13"/>
    </location>
    <ligand>
        <name>Mg(2+)</name>
        <dbReference type="ChEBI" id="CHEBI:18420"/>
    </ligand>
</feature>
<feature type="binding site" description="in other chain" evidence="1">
    <location>
        <begin position="38"/>
        <end position="41"/>
    </location>
    <ligand>
        <name>IMP</name>
        <dbReference type="ChEBI" id="CHEBI:58053"/>
        <note>ligand shared between dimeric partners</note>
    </ligand>
</feature>
<feature type="binding site" evidence="1">
    <location>
        <begin position="40"/>
        <end position="42"/>
    </location>
    <ligand>
        <name>GTP</name>
        <dbReference type="ChEBI" id="CHEBI:37565"/>
    </ligand>
</feature>
<feature type="binding site" evidence="1">
    <location>
        <position position="40"/>
    </location>
    <ligand>
        <name>Mg(2+)</name>
        <dbReference type="ChEBI" id="CHEBI:18420"/>
    </ligand>
</feature>
<feature type="binding site" description="in other chain" evidence="1">
    <location>
        <position position="129"/>
    </location>
    <ligand>
        <name>IMP</name>
        <dbReference type="ChEBI" id="CHEBI:58053"/>
        <note>ligand shared between dimeric partners</note>
    </ligand>
</feature>
<feature type="binding site" evidence="1">
    <location>
        <position position="143"/>
    </location>
    <ligand>
        <name>IMP</name>
        <dbReference type="ChEBI" id="CHEBI:58053"/>
        <note>ligand shared between dimeric partners</note>
    </ligand>
</feature>
<feature type="binding site" description="in other chain" evidence="1">
    <location>
        <position position="223"/>
    </location>
    <ligand>
        <name>IMP</name>
        <dbReference type="ChEBI" id="CHEBI:58053"/>
        <note>ligand shared between dimeric partners</note>
    </ligand>
</feature>
<feature type="binding site" description="in other chain" evidence="1">
    <location>
        <position position="238"/>
    </location>
    <ligand>
        <name>IMP</name>
        <dbReference type="ChEBI" id="CHEBI:58053"/>
        <note>ligand shared between dimeric partners</note>
    </ligand>
</feature>
<feature type="binding site" evidence="1">
    <location>
        <begin position="298"/>
        <end position="304"/>
    </location>
    <ligand>
        <name>substrate</name>
    </ligand>
</feature>
<feature type="binding site" description="in other chain" evidence="1">
    <location>
        <position position="302"/>
    </location>
    <ligand>
        <name>IMP</name>
        <dbReference type="ChEBI" id="CHEBI:58053"/>
        <note>ligand shared between dimeric partners</note>
    </ligand>
</feature>
<feature type="binding site" evidence="1">
    <location>
        <position position="304"/>
    </location>
    <ligand>
        <name>GTP</name>
        <dbReference type="ChEBI" id="CHEBI:37565"/>
    </ligand>
</feature>
<feature type="binding site" evidence="1">
    <location>
        <begin position="330"/>
        <end position="332"/>
    </location>
    <ligand>
        <name>GTP</name>
        <dbReference type="ChEBI" id="CHEBI:37565"/>
    </ligand>
</feature>
<feature type="binding site" evidence="1">
    <location>
        <begin position="412"/>
        <end position="414"/>
    </location>
    <ligand>
        <name>GTP</name>
        <dbReference type="ChEBI" id="CHEBI:37565"/>
    </ligand>
</feature>
<evidence type="ECO:0000255" key="1">
    <source>
        <dbReference type="HAMAP-Rule" id="MF_00011"/>
    </source>
</evidence>
<dbReference type="EC" id="6.3.4.4" evidence="1"/>
<dbReference type="EMBL" id="AE008692">
    <property type="protein sequence ID" value="AAV90311.1"/>
    <property type="molecule type" value="Genomic_DNA"/>
</dbReference>
<dbReference type="RefSeq" id="WP_011241435.1">
    <property type="nucleotide sequence ID" value="NZ_CP035711.1"/>
</dbReference>
<dbReference type="SMR" id="Q5NLU9"/>
<dbReference type="STRING" id="264203.ZMO1687"/>
<dbReference type="KEGG" id="zmo:ZMO1687"/>
<dbReference type="eggNOG" id="COG0104">
    <property type="taxonomic scope" value="Bacteria"/>
</dbReference>
<dbReference type="HOGENOM" id="CLU_029848_0_0_5"/>
<dbReference type="UniPathway" id="UPA00075">
    <property type="reaction ID" value="UER00335"/>
</dbReference>
<dbReference type="Proteomes" id="UP000001173">
    <property type="component" value="Chromosome"/>
</dbReference>
<dbReference type="GO" id="GO:0005737">
    <property type="term" value="C:cytoplasm"/>
    <property type="evidence" value="ECO:0007669"/>
    <property type="project" value="UniProtKB-SubCell"/>
</dbReference>
<dbReference type="GO" id="GO:0004019">
    <property type="term" value="F:adenylosuccinate synthase activity"/>
    <property type="evidence" value="ECO:0007669"/>
    <property type="project" value="UniProtKB-UniRule"/>
</dbReference>
<dbReference type="GO" id="GO:0005525">
    <property type="term" value="F:GTP binding"/>
    <property type="evidence" value="ECO:0007669"/>
    <property type="project" value="UniProtKB-UniRule"/>
</dbReference>
<dbReference type="GO" id="GO:0000287">
    <property type="term" value="F:magnesium ion binding"/>
    <property type="evidence" value="ECO:0007669"/>
    <property type="project" value="UniProtKB-UniRule"/>
</dbReference>
<dbReference type="GO" id="GO:0044208">
    <property type="term" value="P:'de novo' AMP biosynthetic process"/>
    <property type="evidence" value="ECO:0007669"/>
    <property type="project" value="UniProtKB-UniRule"/>
</dbReference>
<dbReference type="GO" id="GO:0046040">
    <property type="term" value="P:IMP metabolic process"/>
    <property type="evidence" value="ECO:0007669"/>
    <property type="project" value="TreeGrafter"/>
</dbReference>
<dbReference type="CDD" id="cd03108">
    <property type="entry name" value="AdSS"/>
    <property type="match status" value="1"/>
</dbReference>
<dbReference type="FunFam" id="1.10.300.10:FF:000001">
    <property type="entry name" value="Adenylosuccinate synthetase"/>
    <property type="match status" value="1"/>
</dbReference>
<dbReference type="FunFam" id="3.90.170.10:FF:000001">
    <property type="entry name" value="Adenylosuccinate synthetase"/>
    <property type="match status" value="1"/>
</dbReference>
<dbReference type="Gene3D" id="3.40.440.10">
    <property type="entry name" value="Adenylosuccinate Synthetase, subunit A, domain 1"/>
    <property type="match status" value="1"/>
</dbReference>
<dbReference type="Gene3D" id="1.10.300.10">
    <property type="entry name" value="Adenylosuccinate Synthetase, subunit A, domain 2"/>
    <property type="match status" value="1"/>
</dbReference>
<dbReference type="Gene3D" id="3.90.170.10">
    <property type="entry name" value="Adenylosuccinate Synthetase, subunit A, domain 3"/>
    <property type="match status" value="1"/>
</dbReference>
<dbReference type="HAMAP" id="MF_00011">
    <property type="entry name" value="Adenylosucc_synth"/>
    <property type="match status" value="1"/>
</dbReference>
<dbReference type="InterPro" id="IPR018220">
    <property type="entry name" value="Adenylosuccin_syn_GTP-bd"/>
</dbReference>
<dbReference type="InterPro" id="IPR033128">
    <property type="entry name" value="Adenylosuccin_syn_Lys_AS"/>
</dbReference>
<dbReference type="InterPro" id="IPR042109">
    <property type="entry name" value="Adenylosuccinate_synth_dom1"/>
</dbReference>
<dbReference type="InterPro" id="IPR042110">
    <property type="entry name" value="Adenylosuccinate_synth_dom2"/>
</dbReference>
<dbReference type="InterPro" id="IPR042111">
    <property type="entry name" value="Adenylosuccinate_synth_dom3"/>
</dbReference>
<dbReference type="InterPro" id="IPR001114">
    <property type="entry name" value="Adenylosuccinate_synthetase"/>
</dbReference>
<dbReference type="InterPro" id="IPR027417">
    <property type="entry name" value="P-loop_NTPase"/>
</dbReference>
<dbReference type="NCBIfam" id="NF002223">
    <property type="entry name" value="PRK01117.1"/>
    <property type="match status" value="1"/>
</dbReference>
<dbReference type="NCBIfam" id="TIGR00184">
    <property type="entry name" value="purA"/>
    <property type="match status" value="1"/>
</dbReference>
<dbReference type="PANTHER" id="PTHR11846">
    <property type="entry name" value="ADENYLOSUCCINATE SYNTHETASE"/>
    <property type="match status" value="1"/>
</dbReference>
<dbReference type="PANTHER" id="PTHR11846:SF0">
    <property type="entry name" value="ADENYLOSUCCINATE SYNTHETASE"/>
    <property type="match status" value="1"/>
</dbReference>
<dbReference type="Pfam" id="PF00709">
    <property type="entry name" value="Adenylsucc_synt"/>
    <property type="match status" value="1"/>
</dbReference>
<dbReference type="SMART" id="SM00788">
    <property type="entry name" value="Adenylsucc_synt"/>
    <property type="match status" value="1"/>
</dbReference>
<dbReference type="SUPFAM" id="SSF52540">
    <property type="entry name" value="P-loop containing nucleoside triphosphate hydrolases"/>
    <property type="match status" value="1"/>
</dbReference>
<dbReference type="PROSITE" id="PS01266">
    <property type="entry name" value="ADENYLOSUCCIN_SYN_1"/>
    <property type="match status" value="1"/>
</dbReference>
<dbReference type="PROSITE" id="PS00513">
    <property type="entry name" value="ADENYLOSUCCIN_SYN_2"/>
    <property type="match status" value="1"/>
</dbReference>
<organism>
    <name type="scientific">Zymomonas mobilis subsp. mobilis (strain ATCC 31821 / ZM4 / CP4)</name>
    <dbReference type="NCBI Taxonomy" id="264203"/>
    <lineage>
        <taxon>Bacteria</taxon>
        <taxon>Pseudomonadati</taxon>
        <taxon>Pseudomonadota</taxon>
        <taxon>Alphaproteobacteria</taxon>
        <taxon>Sphingomonadales</taxon>
        <taxon>Zymomonadaceae</taxon>
        <taxon>Zymomonas</taxon>
    </lineage>
</organism>
<sequence length="429" mass="46767">MANVTVVGAQWGDEGKGKIVDWLAERADVVVRFQGGHNAGHTLVVNGVTYKLSLLPSGVVSGTLSIIGNGVVIDPWHFRDEMERLRKQDVVITPDTLAIAETSPLILPLHSELDGFREDRSGDKKIGTTRRGIGPAYEDKVGRRAIRVCDLAHIDEIGSRLDRLIAHHNALRSGFGKPPVDREKLVNDLKEIAGCILPFAKPAWRILADEQKKNRRILFEGAQGVMLDIDHGTYPYVTSSNTIAGSAAGGSGMGASAVGFVLGIAKAYTTRVGAGPFPTELDDEVGQTLGERGHEFGTVTGRRRRCGWFDSVLMRQSVAVAGITGIALTKLDVLDGFDEIKICTGYKIGDKVYDYLPPYYKDQAAAKPVYETIEGWKESTAGARSWSELPAQAIKYIRRIEELIECPITLVSTSPEREDTILVKDPFLG</sequence>
<proteinExistence type="inferred from homology"/>
<protein>
    <recommendedName>
        <fullName evidence="1">Adenylosuccinate synthetase</fullName>
        <shortName evidence="1">AMPSase</shortName>
        <shortName evidence="1">AdSS</shortName>
        <ecNumber evidence="1">6.3.4.4</ecNumber>
    </recommendedName>
    <alternativeName>
        <fullName evidence="1">IMP--aspartate ligase</fullName>
    </alternativeName>
</protein>
<accession>Q5NLU9</accession>